<keyword id="KW-0963">Cytoplasm</keyword>
<keyword id="KW-0489">Methyltransferase</keyword>
<keyword id="KW-0694">RNA-binding</keyword>
<keyword id="KW-0698">rRNA processing</keyword>
<keyword id="KW-0949">S-adenosyl-L-methionine</keyword>
<keyword id="KW-0808">Transferase</keyword>
<feature type="chain" id="PRO_0000366175" description="Ribosomal RNA small subunit methyltransferase B">
    <location>
        <begin position="1"/>
        <end position="429"/>
    </location>
</feature>
<feature type="active site" description="Nucleophile" evidence="1">
    <location>
        <position position="375"/>
    </location>
</feature>
<feature type="binding site" evidence="1">
    <location>
        <begin position="254"/>
        <end position="260"/>
    </location>
    <ligand>
        <name>S-adenosyl-L-methionine</name>
        <dbReference type="ChEBI" id="CHEBI:59789"/>
    </ligand>
</feature>
<feature type="binding site" evidence="1">
    <location>
        <position position="277"/>
    </location>
    <ligand>
        <name>S-adenosyl-L-methionine</name>
        <dbReference type="ChEBI" id="CHEBI:59789"/>
    </ligand>
</feature>
<feature type="binding site" evidence="1">
    <location>
        <position position="303"/>
    </location>
    <ligand>
        <name>S-adenosyl-L-methionine</name>
        <dbReference type="ChEBI" id="CHEBI:59789"/>
    </ligand>
</feature>
<feature type="binding site" evidence="1">
    <location>
        <position position="322"/>
    </location>
    <ligand>
        <name>S-adenosyl-L-methionine</name>
        <dbReference type="ChEBI" id="CHEBI:59789"/>
    </ligand>
</feature>
<name>RSMB_SERP5</name>
<evidence type="ECO:0000255" key="1">
    <source>
        <dbReference type="HAMAP-Rule" id="MF_01856"/>
    </source>
</evidence>
<dbReference type="EC" id="2.1.1.176" evidence="1"/>
<dbReference type="EMBL" id="CP000826">
    <property type="protein sequence ID" value="ABV43607.1"/>
    <property type="molecule type" value="Genomic_DNA"/>
</dbReference>
<dbReference type="SMR" id="A8GKG7"/>
<dbReference type="STRING" id="399741.Spro_4513"/>
<dbReference type="KEGG" id="spe:Spro_4513"/>
<dbReference type="eggNOG" id="COG0144">
    <property type="taxonomic scope" value="Bacteria"/>
</dbReference>
<dbReference type="eggNOG" id="COG0781">
    <property type="taxonomic scope" value="Bacteria"/>
</dbReference>
<dbReference type="HOGENOM" id="CLU_005316_0_4_6"/>
<dbReference type="OrthoDB" id="9810297at2"/>
<dbReference type="GO" id="GO:0005829">
    <property type="term" value="C:cytosol"/>
    <property type="evidence" value="ECO:0007669"/>
    <property type="project" value="TreeGrafter"/>
</dbReference>
<dbReference type="GO" id="GO:0003723">
    <property type="term" value="F:RNA binding"/>
    <property type="evidence" value="ECO:0007669"/>
    <property type="project" value="UniProtKB-KW"/>
</dbReference>
<dbReference type="GO" id="GO:0009383">
    <property type="term" value="F:rRNA (cytosine-C5-)-methyltransferase activity"/>
    <property type="evidence" value="ECO:0007669"/>
    <property type="project" value="TreeGrafter"/>
</dbReference>
<dbReference type="GO" id="GO:0006355">
    <property type="term" value="P:regulation of DNA-templated transcription"/>
    <property type="evidence" value="ECO:0007669"/>
    <property type="project" value="InterPro"/>
</dbReference>
<dbReference type="GO" id="GO:0070475">
    <property type="term" value="P:rRNA base methylation"/>
    <property type="evidence" value="ECO:0007669"/>
    <property type="project" value="TreeGrafter"/>
</dbReference>
<dbReference type="CDD" id="cd02440">
    <property type="entry name" value="AdoMet_MTases"/>
    <property type="match status" value="1"/>
</dbReference>
<dbReference type="CDD" id="cd00620">
    <property type="entry name" value="Methyltransferase_Sun"/>
    <property type="match status" value="1"/>
</dbReference>
<dbReference type="FunFam" id="1.10.287.730:FF:000001">
    <property type="entry name" value="Ribosomal RNA small subunit methyltransferase B"/>
    <property type="match status" value="1"/>
</dbReference>
<dbReference type="FunFam" id="1.10.940.10:FF:000002">
    <property type="entry name" value="Ribosomal RNA small subunit methyltransferase B"/>
    <property type="match status" value="1"/>
</dbReference>
<dbReference type="FunFam" id="3.30.70.1170:FF:000002">
    <property type="entry name" value="Ribosomal RNA small subunit methyltransferase B"/>
    <property type="match status" value="1"/>
</dbReference>
<dbReference type="FunFam" id="3.40.50.150:FF:000022">
    <property type="entry name" value="Ribosomal RNA small subunit methyltransferase B"/>
    <property type="match status" value="1"/>
</dbReference>
<dbReference type="Gene3D" id="1.10.287.730">
    <property type="entry name" value="Helix hairpin bin"/>
    <property type="match status" value="1"/>
</dbReference>
<dbReference type="Gene3D" id="1.10.940.10">
    <property type="entry name" value="NusB-like"/>
    <property type="match status" value="1"/>
</dbReference>
<dbReference type="Gene3D" id="3.30.70.1170">
    <property type="entry name" value="Sun protein, domain 3"/>
    <property type="match status" value="1"/>
</dbReference>
<dbReference type="Gene3D" id="3.40.50.150">
    <property type="entry name" value="Vaccinia Virus protein VP39"/>
    <property type="match status" value="1"/>
</dbReference>
<dbReference type="HAMAP" id="MF_01856">
    <property type="entry name" value="16SrRNA_methyltr_B"/>
    <property type="match status" value="1"/>
</dbReference>
<dbReference type="InterPro" id="IPR049560">
    <property type="entry name" value="MeTrfase_RsmB-F_NOP2_cat"/>
</dbReference>
<dbReference type="InterPro" id="IPR001678">
    <property type="entry name" value="MeTrfase_RsmB-F_NOP2_dom"/>
</dbReference>
<dbReference type="InterPro" id="IPR035926">
    <property type="entry name" value="NusB-like_sf"/>
</dbReference>
<dbReference type="InterPro" id="IPR006027">
    <property type="entry name" value="NusB_RsmB_TIM44"/>
</dbReference>
<dbReference type="InterPro" id="IPR023267">
    <property type="entry name" value="RCMT"/>
</dbReference>
<dbReference type="InterPro" id="IPR004573">
    <property type="entry name" value="rRNA_ssu_MeTfrase_B"/>
</dbReference>
<dbReference type="InterPro" id="IPR023541">
    <property type="entry name" value="rRNA_ssu_MeTfrase_B_ent"/>
</dbReference>
<dbReference type="InterPro" id="IPR054728">
    <property type="entry name" value="RsmB-like_ferredoxin"/>
</dbReference>
<dbReference type="InterPro" id="IPR048019">
    <property type="entry name" value="RsmB-like_N"/>
</dbReference>
<dbReference type="InterPro" id="IPR018314">
    <property type="entry name" value="RsmB/NOL1/NOP2-like_CS"/>
</dbReference>
<dbReference type="InterPro" id="IPR029063">
    <property type="entry name" value="SAM-dependent_MTases_sf"/>
</dbReference>
<dbReference type="NCBIfam" id="NF008149">
    <property type="entry name" value="PRK10901.1"/>
    <property type="match status" value="1"/>
</dbReference>
<dbReference type="NCBIfam" id="NF011494">
    <property type="entry name" value="PRK14902.1"/>
    <property type="match status" value="1"/>
</dbReference>
<dbReference type="NCBIfam" id="TIGR00563">
    <property type="entry name" value="rsmB"/>
    <property type="match status" value="1"/>
</dbReference>
<dbReference type="PANTHER" id="PTHR22807:SF61">
    <property type="entry name" value="NOL1_NOP2_SUN FAMILY PROTEIN _ ANTITERMINATION NUSB DOMAIN-CONTAINING PROTEIN"/>
    <property type="match status" value="1"/>
</dbReference>
<dbReference type="PANTHER" id="PTHR22807">
    <property type="entry name" value="NOP2 YEAST -RELATED NOL1/NOP2/FMU SUN DOMAIN-CONTAINING"/>
    <property type="match status" value="1"/>
</dbReference>
<dbReference type="Pfam" id="PF01189">
    <property type="entry name" value="Methyltr_RsmB-F"/>
    <property type="match status" value="1"/>
</dbReference>
<dbReference type="Pfam" id="PF01029">
    <property type="entry name" value="NusB"/>
    <property type="match status" value="1"/>
</dbReference>
<dbReference type="Pfam" id="PF22458">
    <property type="entry name" value="RsmF-B_ferredox"/>
    <property type="match status" value="1"/>
</dbReference>
<dbReference type="PRINTS" id="PR02008">
    <property type="entry name" value="RCMTFAMILY"/>
</dbReference>
<dbReference type="SUPFAM" id="SSF48013">
    <property type="entry name" value="NusB-like"/>
    <property type="match status" value="1"/>
</dbReference>
<dbReference type="SUPFAM" id="SSF53335">
    <property type="entry name" value="S-adenosyl-L-methionine-dependent methyltransferases"/>
    <property type="match status" value="1"/>
</dbReference>
<dbReference type="PROSITE" id="PS01153">
    <property type="entry name" value="NOL1_NOP2_SUN"/>
    <property type="match status" value="1"/>
</dbReference>
<dbReference type="PROSITE" id="PS51686">
    <property type="entry name" value="SAM_MT_RSMB_NOP"/>
    <property type="match status" value="1"/>
</dbReference>
<gene>
    <name evidence="1" type="primary">rsmB</name>
    <name evidence="1" type="synonym">sun</name>
    <name type="ordered locus">Spro_4513</name>
</gene>
<proteinExistence type="inferred from homology"/>
<reference key="1">
    <citation type="submission" date="2007-09" db="EMBL/GenBank/DDBJ databases">
        <title>Complete sequence of chromosome of Serratia proteamaculans 568.</title>
        <authorList>
            <consortium name="US DOE Joint Genome Institute"/>
            <person name="Copeland A."/>
            <person name="Lucas S."/>
            <person name="Lapidus A."/>
            <person name="Barry K."/>
            <person name="Glavina del Rio T."/>
            <person name="Dalin E."/>
            <person name="Tice H."/>
            <person name="Pitluck S."/>
            <person name="Chain P."/>
            <person name="Malfatti S."/>
            <person name="Shin M."/>
            <person name="Vergez L."/>
            <person name="Schmutz J."/>
            <person name="Larimer F."/>
            <person name="Land M."/>
            <person name="Hauser L."/>
            <person name="Kyrpides N."/>
            <person name="Kim E."/>
            <person name="Taghavi S."/>
            <person name="Newman L."/>
            <person name="Vangronsveld J."/>
            <person name="van der Lelie D."/>
            <person name="Richardson P."/>
        </authorList>
    </citation>
    <scope>NUCLEOTIDE SEQUENCE [LARGE SCALE GENOMIC DNA]</scope>
    <source>
        <strain>568</strain>
    </source>
</reference>
<accession>A8GKG7</accession>
<organism>
    <name type="scientific">Serratia proteamaculans (strain 568)</name>
    <dbReference type="NCBI Taxonomy" id="399741"/>
    <lineage>
        <taxon>Bacteria</taxon>
        <taxon>Pseudomonadati</taxon>
        <taxon>Pseudomonadota</taxon>
        <taxon>Gammaproteobacteria</taxon>
        <taxon>Enterobacterales</taxon>
        <taxon>Yersiniaceae</taxon>
        <taxon>Serratia</taxon>
    </lineage>
</organism>
<sequence>MKNNYNLRSIAAIAIGQVLDQGQSLSTVLPSLQKTISDKDRALLQELCFGTLRVLPQLEWCIQQLMAKPMTGKQRTLHYLLMVGLYQLLYTRIPAHAVLAETVEGAVALKRPQLKGLINGVLRQFQRQQEELLQRAANNDSRYLHPSWLLKRIQQAYPAQWEQIIDANNQKPPMWLRVNRLHHTREDYLQLMEQAGIAAEPHAEYRDAVRLLAPCAVTDLPGFADGWVTVQDASAQGCVDLLDPQDGEQILDLCAAPGGKTTHILEAAPKAHVMAVDIDEQRLKRVKENLQRLRLHAEVKQGDGRTPQQWCGDKQFDRILLDAPCSATGVIRRHPDIKWLRRDSDIAELAALQAEIIEAIWPHLKSGGVMVYATCSILPAENAEQVSAFLQRHADARLVETGNQQQPGRQNLPHPEDGDGFFYAKLIKM</sequence>
<protein>
    <recommendedName>
        <fullName evidence="1">Ribosomal RNA small subunit methyltransferase B</fullName>
        <ecNumber evidence="1">2.1.1.176</ecNumber>
    </recommendedName>
    <alternativeName>
        <fullName evidence="1">16S rRNA m5C967 methyltransferase</fullName>
    </alternativeName>
    <alternativeName>
        <fullName evidence="1">rRNA (cytosine-C(5)-)-methyltransferase RsmB</fullName>
    </alternativeName>
</protein>
<comment type="function">
    <text evidence="1">Specifically methylates the cytosine at position 967 (m5C967) of 16S rRNA.</text>
</comment>
<comment type="catalytic activity">
    <reaction evidence="1">
        <text>cytidine(967) in 16S rRNA + S-adenosyl-L-methionine = 5-methylcytidine(967) in 16S rRNA + S-adenosyl-L-homocysteine + H(+)</text>
        <dbReference type="Rhea" id="RHEA:42748"/>
        <dbReference type="Rhea" id="RHEA-COMP:10219"/>
        <dbReference type="Rhea" id="RHEA-COMP:10220"/>
        <dbReference type="ChEBI" id="CHEBI:15378"/>
        <dbReference type="ChEBI" id="CHEBI:57856"/>
        <dbReference type="ChEBI" id="CHEBI:59789"/>
        <dbReference type="ChEBI" id="CHEBI:74483"/>
        <dbReference type="ChEBI" id="CHEBI:82748"/>
        <dbReference type="EC" id="2.1.1.176"/>
    </reaction>
</comment>
<comment type="subcellular location">
    <subcellularLocation>
        <location evidence="1">Cytoplasm</location>
    </subcellularLocation>
</comment>
<comment type="similarity">
    <text evidence="1">Belongs to the class I-like SAM-binding methyltransferase superfamily. RsmB/NOP family.</text>
</comment>